<feature type="chain" id="PRO_1000197083" description="N-(5'-phosphoribosyl)anthranilate isomerase">
    <location>
        <begin position="1"/>
        <end position="205"/>
    </location>
</feature>
<comment type="catalytic activity">
    <reaction evidence="1">
        <text>N-(5-phospho-beta-D-ribosyl)anthranilate = 1-(2-carboxyphenylamino)-1-deoxy-D-ribulose 5-phosphate</text>
        <dbReference type="Rhea" id="RHEA:21540"/>
        <dbReference type="ChEBI" id="CHEBI:18277"/>
        <dbReference type="ChEBI" id="CHEBI:58613"/>
        <dbReference type="EC" id="5.3.1.24"/>
    </reaction>
</comment>
<comment type="pathway">
    <text evidence="1">Amino-acid biosynthesis; L-tryptophan biosynthesis; L-tryptophan from chorismate: step 3/5.</text>
</comment>
<comment type="similarity">
    <text evidence="1">Belongs to the TrpF family.</text>
</comment>
<protein>
    <recommendedName>
        <fullName evidence="1">N-(5'-phosphoribosyl)anthranilate isomerase</fullName>
        <shortName evidence="1">PRAI</shortName>
        <ecNumber evidence="1">5.3.1.24</ecNumber>
    </recommendedName>
</protein>
<proteinExistence type="inferred from homology"/>
<gene>
    <name evidence="1" type="primary">trpF</name>
    <name type="ordered locus">BVU_4092</name>
</gene>
<keyword id="KW-0028">Amino-acid biosynthesis</keyword>
<keyword id="KW-0057">Aromatic amino acid biosynthesis</keyword>
<keyword id="KW-0413">Isomerase</keyword>
<keyword id="KW-0822">Tryptophan biosynthesis</keyword>
<accession>A6L7N0</accession>
<organism>
    <name type="scientific">Phocaeicola vulgatus (strain ATCC 8482 / DSM 1447 / JCM 5826 / CCUG 4940 / NBRC 14291 / NCTC 11154)</name>
    <name type="common">Bacteroides vulgatus</name>
    <dbReference type="NCBI Taxonomy" id="435590"/>
    <lineage>
        <taxon>Bacteria</taxon>
        <taxon>Pseudomonadati</taxon>
        <taxon>Bacteroidota</taxon>
        <taxon>Bacteroidia</taxon>
        <taxon>Bacteroidales</taxon>
        <taxon>Bacteroidaceae</taxon>
        <taxon>Phocaeicola</taxon>
    </lineage>
</organism>
<reference key="1">
    <citation type="journal article" date="2007" name="PLoS Biol.">
        <title>Evolution of symbiotic bacteria in the distal human intestine.</title>
        <authorList>
            <person name="Xu J."/>
            <person name="Mahowald M.A."/>
            <person name="Ley R.E."/>
            <person name="Lozupone C.A."/>
            <person name="Hamady M."/>
            <person name="Martens E.C."/>
            <person name="Henrissat B."/>
            <person name="Coutinho P.M."/>
            <person name="Minx P."/>
            <person name="Latreille P."/>
            <person name="Cordum H."/>
            <person name="Van Brunt A."/>
            <person name="Kim K."/>
            <person name="Fulton R.S."/>
            <person name="Fulton L.A."/>
            <person name="Clifton S.W."/>
            <person name="Wilson R.K."/>
            <person name="Knight R.D."/>
            <person name="Gordon J.I."/>
        </authorList>
    </citation>
    <scope>NUCLEOTIDE SEQUENCE [LARGE SCALE GENOMIC DNA]</scope>
    <source>
        <strain>ATCC 8482 / DSM 1447 / JCM 5826 / CCUG 4940 / NBRC 14291 / NCTC 11154</strain>
    </source>
</reference>
<sequence>MIIKVCGMREPENIRAIEQAGADWMGFIFFPQSARYVSHRPEYLPEQCHRIGVFVNESSENILLKAQEFGLHHIQLHGRETPEQCRKLKAAGLGVIKVFSIAQESDLQSAGCYEGVCDYFLFDTACSGYGGSGKTFNWNILQAYRGKTPFLLSGGLRPGSLSLLLQFKHEQWAGIDLNSGFETAPALKDDAAVHTFINQLKQKIQ</sequence>
<evidence type="ECO:0000255" key="1">
    <source>
        <dbReference type="HAMAP-Rule" id="MF_00135"/>
    </source>
</evidence>
<name>TRPF_PHOV8</name>
<dbReference type="EC" id="5.3.1.24" evidence="1"/>
<dbReference type="EMBL" id="CP000139">
    <property type="protein sequence ID" value="ABR41694.1"/>
    <property type="molecule type" value="Genomic_DNA"/>
</dbReference>
<dbReference type="RefSeq" id="WP_012056008.1">
    <property type="nucleotide sequence ID" value="NZ_JANSWM010000087.1"/>
</dbReference>
<dbReference type="SMR" id="A6L7N0"/>
<dbReference type="STRING" id="435590.BVU_4092"/>
<dbReference type="PaxDb" id="435590-BVU_4092"/>
<dbReference type="GeneID" id="5305051"/>
<dbReference type="KEGG" id="bvu:BVU_4092"/>
<dbReference type="eggNOG" id="COG0135">
    <property type="taxonomic scope" value="Bacteria"/>
</dbReference>
<dbReference type="HOGENOM" id="CLU_076364_1_2_10"/>
<dbReference type="BioCyc" id="BVUL435590:G1G59-4231-MONOMER"/>
<dbReference type="UniPathway" id="UPA00035">
    <property type="reaction ID" value="UER00042"/>
</dbReference>
<dbReference type="Proteomes" id="UP000002861">
    <property type="component" value="Chromosome"/>
</dbReference>
<dbReference type="GO" id="GO:0004640">
    <property type="term" value="F:phosphoribosylanthranilate isomerase activity"/>
    <property type="evidence" value="ECO:0007669"/>
    <property type="project" value="UniProtKB-UniRule"/>
</dbReference>
<dbReference type="GO" id="GO:0000162">
    <property type="term" value="P:L-tryptophan biosynthetic process"/>
    <property type="evidence" value="ECO:0007669"/>
    <property type="project" value="UniProtKB-UniRule"/>
</dbReference>
<dbReference type="CDD" id="cd00405">
    <property type="entry name" value="PRAI"/>
    <property type="match status" value="1"/>
</dbReference>
<dbReference type="Gene3D" id="3.20.20.70">
    <property type="entry name" value="Aldolase class I"/>
    <property type="match status" value="1"/>
</dbReference>
<dbReference type="HAMAP" id="MF_00135">
    <property type="entry name" value="PRAI"/>
    <property type="match status" value="1"/>
</dbReference>
<dbReference type="InterPro" id="IPR013785">
    <property type="entry name" value="Aldolase_TIM"/>
</dbReference>
<dbReference type="InterPro" id="IPR001240">
    <property type="entry name" value="PRAI_dom"/>
</dbReference>
<dbReference type="InterPro" id="IPR011060">
    <property type="entry name" value="RibuloseP-bd_barrel"/>
</dbReference>
<dbReference type="InterPro" id="IPR044643">
    <property type="entry name" value="TrpF_fam"/>
</dbReference>
<dbReference type="PANTHER" id="PTHR42894">
    <property type="entry name" value="N-(5'-PHOSPHORIBOSYL)ANTHRANILATE ISOMERASE"/>
    <property type="match status" value="1"/>
</dbReference>
<dbReference type="PANTHER" id="PTHR42894:SF1">
    <property type="entry name" value="N-(5'-PHOSPHORIBOSYL)ANTHRANILATE ISOMERASE"/>
    <property type="match status" value="1"/>
</dbReference>
<dbReference type="Pfam" id="PF00697">
    <property type="entry name" value="PRAI"/>
    <property type="match status" value="1"/>
</dbReference>
<dbReference type="SUPFAM" id="SSF51366">
    <property type="entry name" value="Ribulose-phoshate binding barrel"/>
    <property type="match status" value="1"/>
</dbReference>